<dbReference type="EMBL" id="CP000705">
    <property type="protein sequence ID" value="ABQ83028.1"/>
    <property type="molecule type" value="Genomic_DNA"/>
</dbReference>
<dbReference type="RefSeq" id="WP_003666051.1">
    <property type="nucleotide sequence ID" value="NZ_AZDD01000015.1"/>
</dbReference>
<dbReference type="SMR" id="A5VJK4"/>
<dbReference type="STRING" id="557436.Lreu_0764"/>
<dbReference type="GeneID" id="77191111"/>
<dbReference type="KEGG" id="lre:Lreu_0764"/>
<dbReference type="eggNOG" id="COG1160">
    <property type="taxonomic scope" value="Bacteria"/>
</dbReference>
<dbReference type="HOGENOM" id="CLU_016077_6_2_9"/>
<dbReference type="Proteomes" id="UP000001991">
    <property type="component" value="Chromosome"/>
</dbReference>
<dbReference type="GO" id="GO:0005525">
    <property type="term" value="F:GTP binding"/>
    <property type="evidence" value="ECO:0007669"/>
    <property type="project" value="UniProtKB-UniRule"/>
</dbReference>
<dbReference type="GO" id="GO:0043022">
    <property type="term" value="F:ribosome binding"/>
    <property type="evidence" value="ECO:0007669"/>
    <property type="project" value="TreeGrafter"/>
</dbReference>
<dbReference type="GO" id="GO:0042254">
    <property type="term" value="P:ribosome biogenesis"/>
    <property type="evidence" value="ECO:0007669"/>
    <property type="project" value="UniProtKB-KW"/>
</dbReference>
<dbReference type="CDD" id="cd01894">
    <property type="entry name" value="EngA1"/>
    <property type="match status" value="1"/>
</dbReference>
<dbReference type="CDD" id="cd01895">
    <property type="entry name" value="EngA2"/>
    <property type="match status" value="1"/>
</dbReference>
<dbReference type="FunFam" id="3.30.300.20:FF:000004">
    <property type="entry name" value="GTPase Der"/>
    <property type="match status" value="1"/>
</dbReference>
<dbReference type="FunFam" id="3.40.50.300:FF:000040">
    <property type="entry name" value="GTPase Der"/>
    <property type="match status" value="1"/>
</dbReference>
<dbReference type="FunFam" id="3.40.50.300:FF:000057">
    <property type="entry name" value="GTPase Der"/>
    <property type="match status" value="1"/>
</dbReference>
<dbReference type="Gene3D" id="3.30.300.20">
    <property type="match status" value="1"/>
</dbReference>
<dbReference type="Gene3D" id="3.40.50.300">
    <property type="entry name" value="P-loop containing nucleotide triphosphate hydrolases"/>
    <property type="match status" value="2"/>
</dbReference>
<dbReference type="HAMAP" id="MF_00195">
    <property type="entry name" value="GTPase_Der"/>
    <property type="match status" value="1"/>
</dbReference>
<dbReference type="InterPro" id="IPR031166">
    <property type="entry name" value="G_ENGA"/>
</dbReference>
<dbReference type="InterPro" id="IPR006073">
    <property type="entry name" value="GTP-bd"/>
</dbReference>
<dbReference type="InterPro" id="IPR016484">
    <property type="entry name" value="GTPase_Der"/>
</dbReference>
<dbReference type="InterPro" id="IPR032859">
    <property type="entry name" value="KH_dom-like"/>
</dbReference>
<dbReference type="InterPro" id="IPR015946">
    <property type="entry name" value="KH_dom-like_a/b"/>
</dbReference>
<dbReference type="InterPro" id="IPR027417">
    <property type="entry name" value="P-loop_NTPase"/>
</dbReference>
<dbReference type="InterPro" id="IPR005225">
    <property type="entry name" value="Small_GTP-bd"/>
</dbReference>
<dbReference type="NCBIfam" id="TIGR03594">
    <property type="entry name" value="GTPase_EngA"/>
    <property type="match status" value="1"/>
</dbReference>
<dbReference type="NCBIfam" id="TIGR00231">
    <property type="entry name" value="small_GTP"/>
    <property type="match status" value="2"/>
</dbReference>
<dbReference type="PANTHER" id="PTHR43834">
    <property type="entry name" value="GTPASE DER"/>
    <property type="match status" value="1"/>
</dbReference>
<dbReference type="PANTHER" id="PTHR43834:SF6">
    <property type="entry name" value="GTPASE DER"/>
    <property type="match status" value="1"/>
</dbReference>
<dbReference type="Pfam" id="PF14714">
    <property type="entry name" value="KH_dom-like"/>
    <property type="match status" value="1"/>
</dbReference>
<dbReference type="Pfam" id="PF01926">
    <property type="entry name" value="MMR_HSR1"/>
    <property type="match status" value="2"/>
</dbReference>
<dbReference type="PIRSF" id="PIRSF006485">
    <property type="entry name" value="GTP-binding_EngA"/>
    <property type="match status" value="1"/>
</dbReference>
<dbReference type="SUPFAM" id="SSF52540">
    <property type="entry name" value="P-loop containing nucleoside triphosphate hydrolases"/>
    <property type="match status" value="2"/>
</dbReference>
<dbReference type="PROSITE" id="PS51712">
    <property type="entry name" value="G_ENGA"/>
    <property type="match status" value="2"/>
</dbReference>
<proteinExistence type="inferred from homology"/>
<reference key="1">
    <citation type="journal article" date="2011" name="PLoS Genet.">
        <title>The evolution of host specialization in the vertebrate gut symbiont Lactobacillus reuteri.</title>
        <authorList>
            <person name="Frese S.A."/>
            <person name="Benson A.K."/>
            <person name="Tannock G.W."/>
            <person name="Loach D.M."/>
            <person name="Kim J."/>
            <person name="Zhang M."/>
            <person name="Oh P.L."/>
            <person name="Heng N.C."/>
            <person name="Patil P.B."/>
            <person name="Juge N."/>
            <person name="Mackenzie D.A."/>
            <person name="Pearson B.M."/>
            <person name="Lapidus A."/>
            <person name="Dalin E."/>
            <person name="Tice H."/>
            <person name="Goltsman E."/>
            <person name="Land M."/>
            <person name="Hauser L."/>
            <person name="Ivanova N."/>
            <person name="Kyrpides N.C."/>
            <person name="Walter J."/>
        </authorList>
    </citation>
    <scope>NUCLEOTIDE SEQUENCE [LARGE SCALE GENOMIC DNA]</scope>
    <source>
        <strain>DSM 20016</strain>
    </source>
</reference>
<name>DER_LIMRD</name>
<feature type="chain" id="PRO_1000058525" description="GTPase Der">
    <location>
        <begin position="1"/>
        <end position="437"/>
    </location>
</feature>
<feature type="domain" description="EngA-type G 1">
    <location>
        <begin position="4"/>
        <end position="167"/>
    </location>
</feature>
<feature type="domain" description="EngA-type G 2">
    <location>
        <begin position="175"/>
        <end position="352"/>
    </location>
</feature>
<feature type="domain" description="KH-like" evidence="1">
    <location>
        <begin position="353"/>
        <end position="437"/>
    </location>
</feature>
<feature type="binding site" evidence="1">
    <location>
        <begin position="10"/>
        <end position="17"/>
    </location>
    <ligand>
        <name>GTP</name>
        <dbReference type="ChEBI" id="CHEBI:37565"/>
        <label>1</label>
    </ligand>
</feature>
<feature type="binding site" evidence="1">
    <location>
        <begin position="57"/>
        <end position="61"/>
    </location>
    <ligand>
        <name>GTP</name>
        <dbReference type="ChEBI" id="CHEBI:37565"/>
        <label>1</label>
    </ligand>
</feature>
<feature type="binding site" evidence="1">
    <location>
        <begin position="119"/>
        <end position="122"/>
    </location>
    <ligand>
        <name>GTP</name>
        <dbReference type="ChEBI" id="CHEBI:37565"/>
        <label>1</label>
    </ligand>
</feature>
<feature type="binding site" evidence="1">
    <location>
        <begin position="181"/>
        <end position="188"/>
    </location>
    <ligand>
        <name>GTP</name>
        <dbReference type="ChEBI" id="CHEBI:37565"/>
        <label>2</label>
    </ligand>
</feature>
<feature type="binding site" evidence="1">
    <location>
        <begin position="229"/>
        <end position="233"/>
    </location>
    <ligand>
        <name>GTP</name>
        <dbReference type="ChEBI" id="CHEBI:37565"/>
        <label>2</label>
    </ligand>
</feature>
<feature type="binding site" evidence="1">
    <location>
        <begin position="294"/>
        <end position="297"/>
    </location>
    <ligand>
        <name>GTP</name>
        <dbReference type="ChEBI" id="CHEBI:37565"/>
        <label>2</label>
    </ligand>
</feature>
<protein>
    <recommendedName>
        <fullName evidence="1">GTPase Der</fullName>
    </recommendedName>
    <alternativeName>
        <fullName evidence="1">GTP-binding protein EngA</fullName>
    </alternativeName>
</protein>
<sequence>MANPIVAVVGRPNVGKSTLFNRIAGERISIVEDTPGVTRDRIYAHAEWLGKHFSMIDTGGIEISDQPLLTQIRQQAEIAIDEADVIIFVADVENGVTDADEQVARILYRSNKPVVLAVNKVDNPERRSDIYDYYSLGLGEPYAVSSVHGIGMGDLLDAVIKEFPDNAANDEDDSIHFSFIGRPNVGKSSLVNAILGENRVIVSNVAGTTRDAINTQFETADGQKFTMVDTAGIRKKGKIYENTERYSLMRSMRAIDDSDVVLVVLNAEEGIRELDKHIAGYAHEAGCGVIIVVNKWDTLKEKDHRTMTDFTNLIRQEFQYLSYAPIIFVSAKTKQRLNQLPGLIEEVYQHHRQRIQSAVLNDVLMDAIAANPTPTQNGRRLRVYYGTQVATEPPTFVIFVNDPELMHFSYERYLENQIRKAFDFSGTPIHLIKRQRQ</sequence>
<keyword id="KW-0342">GTP-binding</keyword>
<keyword id="KW-0547">Nucleotide-binding</keyword>
<keyword id="KW-1185">Reference proteome</keyword>
<keyword id="KW-0677">Repeat</keyword>
<keyword id="KW-0690">Ribosome biogenesis</keyword>
<evidence type="ECO:0000255" key="1">
    <source>
        <dbReference type="HAMAP-Rule" id="MF_00195"/>
    </source>
</evidence>
<accession>A5VJK4</accession>
<comment type="function">
    <text evidence="1">GTPase that plays an essential role in the late steps of ribosome biogenesis.</text>
</comment>
<comment type="subunit">
    <text evidence="1">Associates with the 50S ribosomal subunit.</text>
</comment>
<comment type="similarity">
    <text evidence="1">Belongs to the TRAFAC class TrmE-Era-EngA-EngB-Septin-like GTPase superfamily. EngA (Der) GTPase family.</text>
</comment>
<gene>
    <name evidence="1" type="primary">der</name>
    <name type="synonym">engA</name>
    <name type="ordered locus">Lreu_0764</name>
</gene>
<organism>
    <name type="scientific">Limosilactobacillus reuteri (strain DSM 20016)</name>
    <name type="common">Lactobacillus reuteri</name>
    <dbReference type="NCBI Taxonomy" id="557436"/>
    <lineage>
        <taxon>Bacteria</taxon>
        <taxon>Bacillati</taxon>
        <taxon>Bacillota</taxon>
        <taxon>Bacilli</taxon>
        <taxon>Lactobacillales</taxon>
        <taxon>Lactobacillaceae</taxon>
        <taxon>Limosilactobacillus</taxon>
    </lineage>
</organism>